<accession>Q9M891</accession>
<evidence type="ECO:0000255" key="1"/>
<evidence type="ECO:0000305" key="2"/>
<gene>
    <name type="ordered locus">At3g02490</name>
    <name type="ORF">F16B3.12</name>
</gene>
<feature type="transit peptide" description="Mitochondrion" evidence="1">
    <location>
        <begin position="1"/>
        <end position="37"/>
    </location>
</feature>
<feature type="chain" id="PRO_0000356067" description="Pentatricopeptide repeat-containing protein At3g02490, mitochondrial">
    <location>
        <begin position="38"/>
        <end position="665"/>
    </location>
</feature>
<feature type="repeat" description="PPR 1">
    <location>
        <begin position="280"/>
        <end position="314"/>
    </location>
</feature>
<feature type="repeat" description="PPR 2">
    <location>
        <begin position="315"/>
        <end position="349"/>
    </location>
</feature>
<feature type="repeat" description="PPR 3">
    <location>
        <begin position="352"/>
        <end position="388"/>
    </location>
</feature>
<feature type="repeat" description="PPR 4">
    <location>
        <begin position="389"/>
        <end position="423"/>
    </location>
</feature>
<feature type="repeat" description="PPR 5">
    <location>
        <begin position="424"/>
        <end position="458"/>
    </location>
</feature>
<feature type="repeat" description="PPR 6">
    <location>
        <begin position="459"/>
        <end position="493"/>
    </location>
</feature>
<feature type="repeat" description="PPR 7">
    <location>
        <begin position="495"/>
        <end position="530"/>
    </location>
</feature>
<feature type="repeat" description="PPR 8">
    <location>
        <begin position="536"/>
        <end position="570"/>
    </location>
</feature>
<name>PP208_ARATH</name>
<dbReference type="EMBL" id="AC021640">
    <property type="protein sequence ID" value="AAF32456.1"/>
    <property type="molecule type" value="Genomic_DNA"/>
</dbReference>
<dbReference type="EMBL" id="CP002686">
    <property type="protein sequence ID" value="AEE73817.1"/>
    <property type="molecule type" value="Genomic_DNA"/>
</dbReference>
<dbReference type="EMBL" id="BT015365">
    <property type="protein sequence ID" value="AAU05488.1"/>
    <property type="molecule type" value="mRNA"/>
</dbReference>
<dbReference type="EMBL" id="BT020339">
    <property type="protein sequence ID" value="AAV85694.1"/>
    <property type="molecule type" value="mRNA"/>
</dbReference>
<dbReference type="RefSeq" id="NP_186898.1">
    <property type="nucleotide sequence ID" value="NM_111116.4"/>
</dbReference>
<dbReference type="SMR" id="Q9M891"/>
<dbReference type="BioGRID" id="5897">
    <property type="interactions" value="1"/>
</dbReference>
<dbReference type="FunCoup" id="Q9M891">
    <property type="interactions" value="1636"/>
</dbReference>
<dbReference type="STRING" id="3702.Q9M891"/>
<dbReference type="PaxDb" id="3702-AT3G02490.1"/>
<dbReference type="ProteomicsDB" id="249169"/>
<dbReference type="EnsemblPlants" id="AT3G02490.1">
    <property type="protein sequence ID" value="AT3G02490.1"/>
    <property type="gene ID" value="AT3G02490"/>
</dbReference>
<dbReference type="GeneID" id="820563"/>
<dbReference type="Gramene" id="AT3G02490.1">
    <property type="protein sequence ID" value="AT3G02490.1"/>
    <property type="gene ID" value="AT3G02490"/>
</dbReference>
<dbReference type="KEGG" id="ath:AT3G02490"/>
<dbReference type="Araport" id="AT3G02490"/>
<dbReference type="TAIR" id="AT3G02490"/>
<dbReference type="eggNOG" id="KOG4197">
    <property type="taxonomic scope" value="Eukaryota"/>
</dbReference>
<dbReference type="HOGENOM" id="CLU_022294_0_0_1"/>
<dbReference type="InParanoid" id="Q9M891"/>
<dbReference type="OMA" id="VSCLPEM"/>
<dbReference type="PhylomeDB" id="Q9M891"/>
<dbReference type="PRO" id="PR:Q9M891"/>
<dbReference type="Proteomes" id="UP000006548">
    <property type="component" value="Chromosome 3"/>
</dbReference>
<dbReference type="ExpressionAtlas" id="Q9M891">
    <property type="expression patterns" value="baseline and differential"/>
</dbReference>
<dbReference type="GO" id="GO:0005739">
    <property type="term" value="C:mitochondrion"/>
    <property type="evidence" value="ECO:0007669"/>
    <property type="project" value="UniProtKB-SubCell"/>
</dbReference>
<dbReference type="GO" id="GO:0008380">
    <property type="term" value="P:RNA splicing"/>
    <property type="evidence" value="ECO:0007669"/>
    <property type="project" value="InterPro"/>
</dbReference>
<dbReference type="Gene3D" id="1.25.40.10">
    <property type="entry name" value="Tetratricopeptide repeat domain"/>
    <property type="match status" value="3"/>
</dbReference>
<dbReference type="InterPro" id="IPR044578">
    <property type="entry name" value="BIR6-like"/>
</dbReference>
<dbReference type="InterPro" id="IPR002885">
    <property type="entry name" value="Pentatricopeptide_rpt"/>
</dbReference>
<dbReference type="InterPro" id="IPR011990">
    <property type="entry name" value="TPR-like_helical_dom_sf"/>
</dbReference>
<dbReference type="NCBIfam" id="TIGR00756">
    <property type="entry name" value="PPR"/>
    <property type="match status" value="1"/>
</dbReference>
<dbReference type="PANTHER" id="PTHR47003">
    <property type="entry name" value="OS01G0970900 PROTEIN"/>
    <property type="match status" value="1"/>
</dbReference>
<dbReference type="PANTHER" id="PTHR47003:SF6">
    <property type="entry name" value="PENTACOTRIPEPTIDE-REPEAT REGION OF PRORP DOMAIN-CONTAINING PROTEIN"/>
    <property type="match status" value="1"/>
</dbReference>
<dbReference type="Pfam" id="PF01535">
    <property type="entry name" value="PPR"/>
    <property type="match status" value="2"/>
</dbReference>
<dbReference type="PROSITE" id="PS51375">
    <property type="entry name" value="PPR"/>
    <property type="match status" value="8"/>
</dbReference>
<sequence>MRYQWRSLLFRSYRSSPRPFLSHHSRFQVISNSTRSFSSFLHERFGVQQRQCLFALRSPLASSVSRRFSSESAIEEKLPAETVVIDVFSRLNGKDEITKELDSNDVVISHELALRVLRELESSPDVAGRFFKWGLEAYPQKLSSKSYNTMLRIFGVNGLVDEFWRLVDDMKKKGHGVSANVRDRVGDKFKKDGLENDLERLKELFASGSMDNSVDKVCNRVCKIVMKEVWGADVEKQLRDLKLEFKSDVVKMVLEKLDVDPRKALLFFRWIDESGSFKHDEKTYNAMARVLGKEKFLDRFQHMIEEIRSAGYEMEMETYVRVSARFCQTKMIKEAVELFEFAMAGSISNTPTPHCCSLLLKKIVTAKKLDMDLFTRTLKAYTGNGNVVPDVMLQHVLKSLRSVDRFGQSNEVLKAMNEGGYVPSGDLQSVIASGLSRKGKKDEANELVNFMEASGNHLDDKAMASLVEGHCDAKDLEEASECFKKMIGKEGVSYAGYAFEKLVLAYCNSFQARDVYKLFSELVKQNQLKPWHSTYKIMVRNLLMKKVARDGGFEEALSLLPMMRNHGFPPFVDPFMDYLSNSGTSAEAFAFLKAVTSKKFPSNSMVLRVFEAMLKSARHSEAQDLLSMSPSYIRRNAEVLELFNTMKPEKCSLEKPLPAPAQIEA</sequence>
<comment type="subcellular location">
    <subcellularLocation>
        <location evidence="2">Mitochondrion</location>
    </subcellularLocation>
</comment>
<comment type="similarity">
    <text evidence="2">Belongs to the PPR family. P subfamily.</text>
</comment>
<comment type="online information" name="Pentatricopeptide repeat proteins">
    <link uri="https://ppr.plantenergy.uwa.edu.au"/>
</comment>
<proteinExistence type="evidence at transcript level"/>
<protein>
    <recommendedName>
        <fullName>Pentatricopeptide repeat-containing protein At3g02490, mitochondrial</fullName>
    </recommendedName>
</protein>
<organism>
    <name type="scientific">Arabidopsis thaliana</name>
    <name type="common">Mouse-ear cress</name>
    <dbReference type="NCBI Taxonomy" id="3702"/>
    <lineage>
        <taxon>Eukaryota</taxon>
        <taxon>Viridiplantae</taxon>
        <taxon>Streptophyta</taxon>
        <taxon>Embryophyta</taxon>
        <taxon>Tracheophyta</taxon>
        <taxon>Spermatophyta</taxon>
        <taxon>Magnoliopsida</taxon>
        <taxon>eudicotyledons</taxon>
        <taxon>Gunneridae</taxon>
        <taxon>Pentapetalae</taxon>
        <taxon>rosids</taxon>
        <taxon>malvids</taxon>
        <taxon>Brassicales</taxon>
        <taxon>Brassicaceae</taxon>
        <taxon>Camelineae</taxon>
        <taxon>Arabidopsis</taxon>
    </lineage>
</organism>
<keyword id="KW-0496">Mitochondrion</keyword>
<keyword id="KW-1185">Reference proteome</keyword>
<keyword id="KW-0677">Repeat</keyword>
<keyword id="KW-0809">Transit peptide</keyword>
<reference key="1">
    <citation type="journal article" date="2000" name="Nature">
        <title>Sequence and analysis of chromosome 3 of the plant Arabidopsis thaliana.</title>
        <authorList>
            <person name="Salanoubat M."/>
            <person name="Lemcke K."/>
            <person name="Rieger M."/>
            <person name="Ansorge W."/>
            <person name="Unseld M."/>
            <person name="Fartmann B."/>
            <person name="Valle G."/>
            <person name="Bloecker H."/>
            <person name="Perez-Alonso M."/>
            <person name="Obermaier B."/>
            <person name="Delseny M."/>
            <person name="Boutry M."/>
            <person name="Grivell L.A."/>
            <person name="Mache R."/>
            <person name="Puigdomenech P."/>
            <person name="De Simone V."/>
            <person name="Choisne N."/>
            <person name="Artiguenave F."/>
            <person name="Robert C."/>
            <person name="Brottier P."/>
            <person name="Wincker P."/>
            <person name="Cattolico L."/>
            <person name="Weissenbach J."/>
            <person name="Saurin W."/>
            <person name="Quetier F."/>
            <person name="Schaefer M."/>
            <person name="Mueller-Auer S."/>
            <person name="Gabel C."/>
            <person name="Fuchs M."/>
            <person name="Benes V."/>
            <person name="Wurmbach E."/>
            <person name="Drzonek H."/>
            <person name="Erfle H."/>
            <person name="Jordan N."/>
            <person name="Bangert S."/>
            <person name="Wiedelmann R."/>
            <person name="Kranz H."/>
            <person name="Voss H."/>
            <person name="Holland R."/>
            <person name="Brandt P."/>
            <person name="Nyakatura G."/>
            <person name="Vezzi A."/>
            <person name="D'Angelo M."/>
            <person name="Pallavicini A."/>
            <person name="Toppo S."/>
            <person name="Simionati B."/>
            <person name="Conrad A."/>
            <person name="Hornischer K."/>
            <person name="Kauer G."/>
            <person name="Loehnert T.-H."/>
            <person name="Nordsiek G."/>
            <person name="Reichelt J."/>
            <person name="Scharfe M."/>
            <person name="Schoen O."/>
            <person name="Bargues M."/>
            <person name="Terol J."/>
            <person name="Climent J."/>
            <person name="Navarro P."/>
            <person name="Collado C."/>
            <person name="Perez-Perez A."/>
            <person name="Ottenwaelder B."/>
            <person name="Duchemin D."/>
            <person name="Cooke R."/>
            <person name="Laudie M."/>
            <person name="Berger-Llauro C."/>
            <person name="Purnelle B."/>
            <person name="Masuy D."/>
            <person name="de Haan M."/>
            <person name="Maarse A.C."/>
            <person name="Alcaraz J.-P."/>
            <person name="Cottet A."/>
            <person name="Casacuberta E."/>
            <person name="Monfort A."/>
            <person name="Argiriou A."/>
            <person name="Flores M."/>
            <person name="Liguori R."/>
            <person name="Vitale D."/>
            <person name="Mannhaupt G."/>
            <person name="Haase D."/>
            <person name="Schoof H."/>
            <person name="Rudd S."/>
            <person name="Zaccaria P."/>
            <person name="Mewes H.-W."/>
            <person name="Mayer K.F.X."/>
            <person name="Kaul S."/>
            <person name="Town C.D."/>
            <person name="Koo H.L."/>
            <person name="Tallon L.J."/>
            <person name="Jenkins J."/>
            <person name="Rooney T."/>
            <person name="Rizzo M."/>
            <person name="Walts A."/>
            <person name="Utterback T."/>
            <person name="Fujii C.Y."/>
            <person name="Shea T.P."/>
            <person name="Creasy T.H."/>
            <person name="Haas B."/>
            <person name="Maiti R."/>
            <person name="Wu D."/>
            <person name="Peterson J."/>
            <person name="Van Aken S."/>
            <person name="Pai G."/>
            <person name="Militscher J."/>
            <person name="Sellers P."/>
            <person name="Gill J.E."/>
            <person name="Feldblyum T.V."/>
            <person name="Preuss D."/>
            <person name="Lin X."/>
            <person name="Nierman W.C."/>
            <person name="Salzberg S.L."/>
            <person name="White O."/>
            <person name="Venter J.C."/>
            <person name="Fraser C.M."/>
            <person name="Kaneko T."/>
            <person name="Nakamura Y."/>
            <person name="Sato S."/>
            <person name="Kato T."/>
            <person name="Asamizu E."/>
            <person name="Sasamoto S."/>
            <person name="Kimura T."/>
            <person name="Idesawa K."/>
            <person name="Kawashima K."/>
            <person name="Kishida Y."/>
            <person name="Kiyokawa C."/>
            <person name="Kohara M."/>
            <person name="Matsumoto M."/>
            <person name="Matsuno A."/>
            <person name="Muraki A."/>
            <person name="Nakayama S."/>
            <person name="Nakazaki N."/>
            <person name="Shinpo S."/>
            <person name="Takeuchi C."/>
            <person name="Wada T."/>
            <person name="Watanabe A."/>
            <person name="Yamada M."/>
            <person name="Yasuda M."/>
            <person name="Tabata S."/>
        </authorList>
    </citation>
    <scope>NUCLEOTIDE SEQUENCE [LARGE SCALE GENOMIC DNA]</scope>
    <source>
        <strain>cv. Columbia</strain>
    </source>
</reference>
<reference key="2">
    <citation type="journal article" date="2017" name="Plant J.">
        <title>Araport11: a complete reannotation of the Arabidopsis thaliana reference genome.</title>
        <authorList>
            <person name="Cheng C.Y."/>
            <person name="Krishnakumar V."/>
            <person name="Chan A.P."/>
            <person name="Thibaud-Nissen F."/>
            <person name="Schobel S."/>
            <person name="Town C.D."/>
        </authorList>
    </citation>
    <scope>GENOME REANNOTATION</scope>
    <source>
        <strain>cv. Columbia</strain>
    </source>
</reference>
<reference key="3">
    <citation type="submission" date="2004-12" db="EMBL/GenBank/DDBJ databases">
        <title>Arabidopsis ORF clones.</title>
        <authorList>
            <person name="Cheuk R.F."/>
            <person name="Chen H."/>
            <person name="Kim C.J."/>
            <person name="Shinn P."/>
            <person name="Ecker J.R."/>
        </authorList>
    </citation>
    <scope>NUCLEOTIDE SEQUENCE [LARGE SCALE MRNA]</scope>
    <source>
        <strain>cv. Columbia</strain>
    </source>
</reference>
<reference key="4">
    <citation type="journal article" date="2004" name="Plant Cell">
        <title>Genome-wide analysis of Arabidopsis pentatricopeptide repeat proteins reveals their essential role in organelle biogenesis.</title>
        <authorList>
            <person name="Lurin C."/>
            <person name="Andres C."/>
            <person name="Aubourg S."/>
            <person name="Bellaoui M."/>
            <person name="Bitton F."/>
            <person name="Bruyere C."/>
            <person name="Caboche M."/>
            <person name="Debast C."/>
            <person name="Gualberto J."/>
            <person name="Hoffmann B."/>
            <person name="Lecharny A."/>
            <person name="Le Ret M."/>
            <person name="Martin-Magniette M.-L."/>
            <person name="Mireau H."/>
            <person name="Peeters N."/>
            <person name="Renou J.-P."/>
            <person name="Szurek B."/>
            <person name="Taconnat L."/>
            <person name="Small I."/>
        </authorList>
    </citation>
    <scope>GENE FAMILY</scope>
</reference>